<comment type="function">
    <text evidence="1">Cleaves the N-terminal amino acid of tripeptides.</text>
</comment>
<comment type="catalytic activity">
    <reaction evidence="1">
        <text>Release of the N-terminal residue from a tripeptide.</text>
        <dbReference type="EC" id="3.4.11.4"/>
    </reaction>
</comment>
<comment type="cofactor">
    <cofactor evidence="1">
        <name>Zn(2+)</name>
        <dbReference type="ChEBI" id="CHEBI:29105"/>
    </cofactor>
    <text evidence="1">Binds 2 Zn(2+) ions per subunit.</text>
</comment>
<comment type="subcellular location">
    <subcellularLocation>
        <location evidence="1">Cytoplasm</location>
    </subcellularLocation>
</comment>
<comment type="similarity">
    <text evidence="1">Belongs to the peptidase M20B family.</text>
</comment>
<name>PEPT_VIBPA</name>
<organism>
    <name type="scientific">Vibrio parahaemolyticus serotype O3:K6 (strain RIMD 2210633)</name>
    <dbReference type="NCBI Taxonomy" id="223926"/>
    <lineage>
        <taxon>Bacteria</taxon>
        <taxon>Pseudomonadati</taxon>
        <taxon>Pseudomonadota</taxon>
        <taxon>Gammaproteobacteria</taxon>
        <taxon>Vibrionales</taxon>
        <taxon>Vibrionaceae</taxon>
        <taxon>Vibrio</taxon>
    </lineage>
</organism>
<feature type="chain" id="PRO_0000185332" description="Peptidase T">
    <location>
        <begin position="1"/>
        <end position="409"/>
    </location>
</feature>
<feature type="active site" evidence="1">
    <location>
        <position position="80"/>
    </location>
</feature>
<feature type="active site" description="Proton acceptor" evidence="1">
    <location>
        <position position="174"/>
    </location>
</feature>
<feature type="binding site" evidence="1">
    <location>
        <position position="78"/>
    </location>
    <ligand>
        <name>Zn(2+)</name>
        <dbReference type="ChEBI" id="CHEBI:29105"/>
        <label>1</label>
    </ligand>
</feature>
<feature type="binding site" evidence="1">
    <location>
        <position position="140"/>
    </location>
    <ligand>
        <name>Zn(2+)</name>
        <dbReference type="ChEBI" id="CHEBI:29105"/>
        <label>1</label>
    </ligand>
</feature>
<feature type="binding site" evidence="1">
    <location>
        <position position="140"/>
    </location>
    <ligand>
        <name>Zn(2+)</name>
        <dbReference type="ChEBI" id="CHEBI:29105"/>
        <label>2</label>
    </ligand>
</feature>
<feature type="binding site" evidence="1">
    <location>
        <position position="175"/>
    </location>
    <ligand>
        <name>Zn(2+)</name>
        <dbReference type="ChEBI" id="CHEBI:29105"/>
        <label>2</label>
    </ligand>
</feature>
<feature type="binding site" evidence="1">
    <location>
        <position position="197"/>
    </location>
    <ligand>
        <name>Zn(2+)</name>
        <dbReference type="ChEBI" id="CHEBI:29105"/>
        <label>1</label>
    </ligand>
</feature>
<feature type="binding site" evidence="1">
    <location>
        <position position="379"/>
    </location>
    <ligand>
        <name>Zn(2+)</name>
        <dbReference type="ChEBI" id="CHEBI:29105"/>
        <label>2</label>
    </ligand>
</feature>
<dbReference type="EC" id="3.4.11.4" evidence="1"/>
<dbReference type="EMBL" id="BA000032">
    <property type="protein sequence ID" value="BAC62536.1"/>
    <property type="molecule type" value="Genomic_DNA"/>
</dbReference>
<dbReference type="RefSeq" id="NP_800703.1">
    <property type="nucleotide sequence ID" value="NC_004605.1"/>
</dbReference>
<dbReference type="RefSeq" id="WP_005477102.1">
    <property type="nucleotide sequence ID" value="NC_004605.1"/>
</dbReference>
<dbReference type="SMR" id="Q87GX2"/>
<dbReference type="MEROPS" id="M20.003"/>
<dbReference type="GeneID" id="1191889"/>
<dbReference type="KEGG" id="vpa:VPA1193"/>
<dbReference type="PATRIC" id="fig|223926.6.peg.4118"/>
<dbReference type="eggNOG" id="COG2195">
    <property type="taxonomic scope" value="Bacteria"/>
</dbReference>
<dbReference type="HOGENOM" id="CLU_053676_0_0_6"/>
<dbReference type="Proteomes" id="UP000002493">
    <property type="component" value="Chromosome 2"/>
</dbReference>
<dbReference type="GO" id="GO:0005829">
    <property type="term" value="C:cytosol"/>
    <property type="evidence" value="ECO:0007669"/>
    <property type="project" value="TreeGrafter"/>
</dbReference>
<dbReference type="GO" id="GO:0008237">
    <property type="term" value="F:metallopeptidase activity"/>
    <property type="evidence" value="ECO:0007669"/>
    <property type="project" value="UniProtKB-KW"/>
</dbReference>
<dbReference type="GO" id="GO:0045148">
    <property type="term" value="F:tripeptide aminopeptidase activity"/>
    <property type="evidence" value="ECO:0007669"/>
    <property type="project" value="UniProtKB-UniRule"/>
</dbReference>
<dbReference type="GO" id="GO:0008270">
    <property type="term" value="F:zinc ion binding"/>
    <property type="evidence" value="ECO:0007669"/>
    <property type="project" value="UniProtKB-UniRule"/>
</dbReference>
<dbReference type="GO" id="GO:0043171">
    <property type="term" value="P:peptide catabolic process"/>
    <property type="evidence" value="ECO:0007669"/>
    <property type="project" value="UniProtKB-UniRule"/>
</dbReference>
<dbReference type="GO" id="GO:0006508">
    <property type="term" value="P:proteolysis"/>
    <property type="evidence" value="ECO:0007669"/>
    <property type="project" value="UniProtKB-UniRule"/>
</dbReference>
<dbReference type="CDD" id="cd03892">
    <property type="entry name" value="M20_peptT"/>
    <property type="match status" value="1"/>
</dbReference>
<dbReference type="Gene3D" id="3.30.70.360">
    <property type="match status" value="1"/>
</dbReference>
<dbReference type="Gene3D" id="3.40.630.10">
    <property type="entry name" value="Zn peptidases"/>
    <property type="match status" value="1"/>
</dbReference>
<dbReference type="HAMAP" id="MF_00550">
    <property type="entry name" value="Aminopeptidase_M20"/>
    <property type="match status" value="1"/>
</dbReference>
<dbReference type="InterPro" id="IPR001261">
    <property type="entry name" value="ArgE/DapE_CS"/>
</dbReference>
<dbReference type="InterPro" id="IPR036264">
    <property type="entry name" value="Bact_exopeptidase_dim_dom"/>
</dbReference>
<dbReference type="InterPro" id="IPR002933">
    <property type="entry name" value="Peptidase_M20"/>
</dbReference>
<dbReference type="InterPro" id="IPR011650">
    <property type="entry name" value="Peptidase_M20_dimer"/>
</dbReference>
<dbReference type="InterPro" id="IPR010161">
    <property type="entry name" value="Peptidase_M20B"/>
</dbReference>
<dbReference type="NCBIfam" id="TIGR01882">
    <property type="entry name" value="peptidase-T"/>
    <property type="match status" value="1"/>
</dbReference>
<dbReference type="NCBIfam" id="NF003976">
    <property type="entry name" value="PRK05469.1"/>
    <property type="match status" value="1"/>
</dbReference>
<dbReference type="NCBIfam" id="NF009920">
    <property type="entry name" value="PRK13381.1"/>
    <property type="match status" value="1"/>
</dbReference>
<dbReference type="PANTHER" id="PTHR42994">
    <property type="entry name" value="PEPTIDASE T"/>
    <property type="match status" value="1"/>
</dbReference>
<dbReference type="PANTHER" id="PTHR42994:SF1">
    <property type="entry name" value="PEPTIDASE T"/>
    <property type="match status" value="1"/>
</dbReference>
<dbReference type="Pfam" id="PF07687">
    <property type="entry name" value="M20_dimer"/>
    <property type="match status" value="1"/>
</dbReference>
<dbReference type="Pfam" id="PF01546">
    <property type="entry name" value="Peptidase_M20"/>
    <property type="match status" value="1"/>
</dbReference>
<dbReference type="PIRSF" id="PIRSF037215">
    <property type="entry name" value="Peptidase_M20B"/>
    <property type="match status" value="1"/>
</dbReference>
<dbReference type="SUPFAM" id="SSF55031">
    <property type="entry name" value="Bacterial exopeptidase dimerisation domain"/>
    <property type="match status" value="1"/>
</dbReference>
<dbReference type="SUPFAM" id="SSF53187">
    <property type="entry name" value="Zn-dependent exopeptidases"/>
    <property type="match status" value="1"/>
</dbReference>
<dbReference type="PROSITE" id="PS00758">
    <property type="entry name" value="ARGE_DAPE_CPG2_1"/>
    <property type="match status" value="1"/>
</dbReference>
<dbReference type="PROSITE" id="PS00759">
    <property type="entry name" value="ARGE_DAPE_CPG2_2"/>
    <property type="match status" value="1"/>
</dbReference>
<keyword id="KW-0031">Aminopeptidase</keyword>
<keyword id="KW-0963">Cytoplasm</keyword>
<keyword id="KW-0378">Hydrolase</keyword>
<keyword id="KW-0479">Metal-binding</keyword>
<keyword id="KW-0482">Metalloprotease</keyword>
<keyword id="KW-0645">Protease</keyword>
<keyword id="KW-0862">Zinc</keyword>
<protein>
    <recommendedName>
        <fullName evidence="1">Peptidase T</fullName>
        <ecNumber evidence="1">3.4.11.4</ecNumber>
    </recommendedName>
    <alternativeName>
        <fullName evidence="1">Aminotripeptidase</fullName>
        <shortName evidence="1">Tripeptidase</shortName>
    </alternativeName>
    <alternativeName>
        <fullName evidence="1">Tripeptide aminopeptidase</fullName>
    </alternativeName>
</protein>
<sequence length="409" mass="44837">MKHLVERFLRYVTFDTQSNPHVAQCPSSPGQLVFAELLKQEMLDFGLSDVTLDEHGYLMAKLPSNVDYDVPPIGFIAHMDTAPDASGKNVNPQFVEDYQGGDIALGLGDEVLSPVQYPDLHNLHGHNLITTDGTTLLGADNKAGIAEILSAIAMLIENPDIPHGDICIGFTPDEEIGRGADLFDVEKFGAKWAYTIDGGPQGELEYENFNAASADVIFHGVSVHPGTAKGKMVNAMNLAAQFQVKMPADQTPETTEGYEGFFHLKSGELGIARSELGYIIRDFDREGLEERKALMQKLVDEMNAGLKHGSVELNITDSYYNMREMVEPYPHIIELAKQAMEACDVEPLIKPIRGGTDGARLSFMGLPCPNIFTGGFNFHGIHEFISVEMMEKSVLVIVKIAELTAKKHG</sequence>
<accession>Q87GX2</accession>
<reference key="1">
    <citation type="journal article" date="2003" name="Lancet">
        <title>Genome sequence of Vibrio parahaemolyticus: a pathogenic mechanism distinct from that of V. cholerae.</title>
        <authorList>
            <person name="Makino K."/>
            <person name="Oshima K."/>
            <person name="Kurokawa K."/>
            <person name="Yokoyama K."/>
            <person name="Uda T."/>
            <person name="Tagomori K."/>
            <person name="Iijima Y."/>
            <person name="Najima M."/>
            <person name="Nakano M."/>
            <person name="Yamashita A."/>
            <person name="Kubota Y."/>
            <person name="Kimura S."/>
            <person name="Yasunaga T."/>
            <person name="Honda T."/>
            <person name="Shinagawa H."/>
            <person name="Hattori M."/>
            <person name="Iida T."/>
        </authorList>
    </citation>
    <scope>NUCLEOTIDE SEQUENCE [LARGE SCALE GENOMIC DNA]</scope>
    <source>
        <strain>RIMD 2210633</strain>
    </source>
</reference>
<evidence type="ECO:0000255" key="1">
    <source>
        <dbReference type="HAMAP-Rule" id="MF_00550"/>
    </source>
</evidence>
<gene>
    <name evidence="1" type="primary">pepT</name>
    <name type="ordered locus">VPA1193</name>
</gene>
<proteinExistence type="inferred from homology"/>